<sequence>MATATRLLGWRVASWRMRPPPAGFVSQRAHSLLPVDDAINGLSEEQRQLRQTVAKFLQEHLAPKAQEIDRSNEFKNLREFWKQLGNLGVLGITAPVQYGGSGLGYLEHVLVMEEISRASGAVGLSYGAHSNLCINQLVRNGNEAQKEKYLPKLISGEYIGALAMSEPNAGSDVVSMKLKAEKKGNHYILNGNKFWITNGPDADVLIVYAKTDLAAVPASRGITAFIVEKGMPGFSTSKKLDKLGMRGSNTCELIFEDCKVPAANILGHENKGVYVLMSGLDLERLVLAGGPLGLMQAVLDHTIPYLHVREAFGQKIGHFQLMQGKMADMYTRLMACRQYVYNVAKACDEGHCTAKDCAGVILYSAECATQVALDGIQCFGGNGYINDFPMGRFLRDAKLYEIGAGTSEVRRLVIGRAFNADFH</sequence>
<protein>
    <recommendedName>
        <fullName>Isovaleryl-CoA dehydrogenase, mitochondrial</fullName>
        <shortName>IVD</shortName>
        <ecNumber evidence="2">1.3.8.4</ecNumber>
    </recommendedName>
    <alternativeName>
        <fullName>Butyryl-CoA dehydrogenase</fullName>
        <ecNumber evidence="2">1.3.8.1</ecNumber>
    </alternativeName>
</protein>
<accession>Q5RBD5</accession>
<keyword id="KW-0007">Acetylation</keyword>
<keyword id="KW-0274">FAD</keyword>
<keyword id="KW-0285">Flavoprotein</keyword>
<keyword id="KW-0496">Mitochondrion</keyword>
<keyword id="KW-0560">Oxidoreductase</keyword>
<keyword id="KW-1185">Reference proteome</keyword>
<keyword id="KW-0809">Transit peptide</keyword>
<organism>
    <name type="scientific">Pongo abelii</name>
    <name type="common">Sumatran orangutan</name>
    <name type="synonym">Pongo pygmaeus abelii</name>
    <dbReference type="NCBI Taxonomy" id="9601"/>
    <lineage>
        <taxon>Eukaryota</taxon>
        <taxon>Metazoa</taxon>
        <taxon>Chordata</taxon>
        <taxon>Craniata</taxon>
        <taxon>Vertebrata</taxon>
        <taxon>Euteleostomi</taxon>
        <taxon>Mammalia</taxon>
        <taxon>Eutheria</taxon>
        <taxon>Euarchontoglires</taxon>
        <taxon>Primates</taxon>
        <taxon>Haplorrhini</taxon>
        <taxon>Catarrhini</taxon>
        <taxon>Hominidae</taxon>
        <taxon>Pongo</taxon>
    </lineage>
</organism>
<gene>
    <name type="primary">IVD</name>
</gene>
<evidence type="ECO:0000250" key="1">
    <source>
        <dbReference type="UniProtKB" id="P12007"/>
    </source>
</evidence>
<evidence type="ECO:0000250" key="2">
    <source>
        <dbReference type="UniProtKB" id="P26440"/>
    </source>
</evidence>
<evidence type="ECO:0000250" key="3">
    <source>
        <dbReference type="UniProtKB" id="Q9JHI5"/>
    </source>
</evidence>
<evidence type="ECO:0000305" key="4"/>
<comment type="function">
    <text evidence="2">Catalyzes the conversion of isovaleryl-CoA/3-methylbutanoyl-CoA to 3-methylbut-2-enoyl-CoA as an intermediate step in the leucine (Leu) catabolic pathway. To a lesser extent, is also able to catalyze the oxidation of other saturated short-chain acyl-CoA thioesters as pentanoyl-CoA, hexenoyl-CoA and butenoyl-CoA.</text>
</comment>
<comment type="catalytic activity">
    <reaction evidence="2">
        <text>3-methylbutanoyl-CoA + oxidized [electron-transfer flavoprotein] + H(+) = 3-methylbut-2-enoyl-CoA + reduced [electron-transfer flavoprotein]</text>
        <dbReference type="Rhea" id="RHEA:12276"/>
        <dbReference type="Rhea" id="RHEA-COMP:10685"/>
        <dbReference type="Rhea" id="RHEA-COMP:10686"/>
        <dbReference type="ChEBI" id="CHEBI:15378"/>
        <dbReference type="ChEBI" id="CHEBI:57344"/>
        <dbReference type="ChEBI" id="CHEBI:57345"/>
        <dbReference type="ChEBI" id="CHEBI:57692"/>
        <dbReference type="ChEBI" id="CHEBI:58307"/>
        <dbReference type="EC" id="1.3.8.4"/>
    </reaction>
</comment>
<comment type="catalytic activity">
    <reaction evidence="2">
        <text>pentanoyl-CoA + oxidized [electron-transfer flavoprotein] + H(+) = (2E)-pentenoyl-CoA + reduced [electron-transfer flavoprotein]</text>
        <dbReference type="Rhea" id="RHEA:43456"/>
        <dbReference type="Rhea" id="RHEA-COMP:10685"/>
        <dbReference type="Rhea" id="RHEA-COMP:10686"/>
        <dbReference type="ChEBI" id="CHEBI:15378"/>
        <dbReference type="ChEBI" id="CHEBI:57389"/>
        <dbReference type="ChEBI" id="CHEBI:57692"/>
        <dbReference type="ChEBI" id="CHEBI:58307"/>
        <dbReference type="ChEBI" id="CHEBI:86160"/>
    </reaction>
</comment>
<comment type="catalytic activity">
    <reaction evidence="2">
        <text>hexanoyl-CoA + oxidized [electron-transfer flavoprotein] + H(+) = (2E)-hexenoyl-CoA + reduced [electron-transfer flavoprotein]</text>
        <dbReference type="Rhea" id="RHEA:43464"/>
        <dbReference type="Rhea" id="RHEA-COMP:10685"/>
        <dbReference type="Rhea" id="RHEA-COMP:10686"/>
        <dbReference type="ChEBI" id="CHEBI:15378"/>
        <dbReference type="ChEBI" id="CHEBI:57692"/>
        <dbReference type="ChEBI" id="CHEBI:58307"/>
        <dbReference type="ChEBI" id="CHEBI:62077"/>
        <dbReference type="ChEBI" id="CHEBI:62620"/>
    </reaction>
</comment>
<comment type="catalytic activity">
    <reaction evidence="2">
        <text>butanoyl-CoA + oxidized [electron-transfer flavoprotein] + H(+) = (2E)-butenoyl-CoA + reduced [electron-transfer flavoprotein]</text>
        <dbReference type="Rhea" id="RHEA:24004"/>
        <dbReference type="Rhea" id="RHEA-COMP:10685"/>
        <dbReference type="Rhea" id="RHEA-COMP:10686"/>
        <dbReference type="ChEBI" id="CHEBI:15378"/>
        <dbReference type="ChEBI" id="CHEBI:57332"/>
        <dbReference type="ChEBI" id="CHEBI:57371"/>
        <dbReference type="ChEBI" id="CHEBI:57692"/>
        <dbReference type="ChEBI" id="CHEBI:58307"/>
        <dbReference type="EC" id="1.3.8.1"/>
    </reaction>
</comment>
<comment type="cofactor">
    <cofactor evidence="2">
        <name>FAD</name>
        <dbReference type="ChEBI" id="CHEBI:57692"/>
    </cofactor>
</comment>
<comment type="pathway">
    <text>Amino-acid degradation; L-leucine degradation; (S)-3-hydroxy-3-methylglutaryl-CoA from 3-isovaleryl-CoA: step 1/3.</text>
</comment>
<comment type="subunit">
    <text evidence="2">Homotetramer.</text>
</comment>
<comment type="subcellular location">
    <subcellularLocation>
        <location evidence="1">Mitochondrion matrix</location>
    </subcellularLocation>
</comment>
<comment type="similarity">
    <text evidence="4">Belongs to the acyl-CoA dehydrogenase family.</text>
</comment>
<dbReference type="EC" id="1.3.8.4" evidence="2"/>
<dbReference type="EC" id="1.3.8.1" evidence="2"/>
<dbReference type="EMBL" id="CR858716">
    <property type="protein sequence ID" value="CAH90925.1"/>
    <property type="molecule type" value="mRNA"/>
</dbReference>
<dbReference type="RefSeq" id="NP_001125529.1">
    <property type="nucleotide sequence ID" value="NM_001132057.1"/>
</dbReference>
<dbReference type="SMR" id="Q5RBD5"/>
<dbReference type="FunCoup" id="Q5RBD5">
    <property type="interactions" value="1978"/>
</dbReference>
<dbReference type="STRING" id="9601.ENSPPYP00000007191"/>
<dbReference type="GeneID" id="100172441"/>
<dbReference type="KEGG" id="pon:100172441"/>
<dbReference type="CTD" id="3712"/>
<dbReference type="eggNOG" id="KOG0141">
    <property type="taxonomic scope" value="Eukaryota"/>
</dbReference>
<dbReference type="InParanoid" id="Q5RBD5"/>
<dbReference type="OrthoDB" id="9988775at2759"/>
<dbReference type="UniPathway" id="UPA00363">
    <property type="reaction ID" value="UER00860"/>
</dbReference>
<dbReference type="Proteomes" id="UP000001595">
    <property type="component" value="Unplaced"/>
</dbReference>
<dbReference type="GO" id="GO:0005759">
    <property type="term" value="C:mitochondrial matrix"/>
    <property type="evidence" value="ECO:0000250"/>
    <property type="project" value="UniProtKB"/>
</dbReference>
<dbReference type="GO" id="GO:0008470">
    <property type="term" value="F:3-methylbutanoyl-CoA dehydrogenase activity"/>
    <property type="evidence" value="ECO:0000250"/>
    <property type="project" value="UniProtKB"/>
</dbReference>
<dbReference type="GO" id="GO:0050660">
    <property type="term" value="F:flavin adenine dinucleotide binding"/>
    <property type="evidence" value="ECO:0007669"/>
    <property type="project" value="InterPro"/>
</dbReference>
<dbReference type="GO" id="GO:0042802">
    <property type="term" value="F:identical protein binding"/>
    <property type="evidence" value="ECO:0000250"/>
    <property type="project" value="UniProtKB"/>
</dbReference>
<dbReference type="GO" id="GO:0009083">
    <property type="term" value="P:branched-chain amino acid catabolic process"/>
    <property type="evidence" value="ECO:0000250"/>
    <property type="project" value="UniProtKB"/>
</dbReference>
<dbReference type="GO" id="GO:0006552">
    <property type="term" value="P:L-leucine catabolic process"/>
    <property type="evidence" value="ECO:0000250"/>
    <property type="project" value="UniProtKB"/>
</dbReference>
<dbReference type="CDD" id="cd01156">
    <property type="entry name" value="IVD"/>
    <property type="match status" value="1"/>
</dbReference>
<dbReference type="FunFam" id="1.10.540.10:FF:000007">
    <property type="entry name" value="Isovaleryl-CoA dehydrogenase, mitochondrial"/>
    <property type="match status" value="1"/>
</dbReference>
<dbReference type="FunFam" id="2.40.110.10:FF:000004">
    <property type="entry name" value="Isovaleryl-CoA dehydrogenase, mitochondrial"/>
    <property type="match status" value="1"/>
</dbReference>
<dbReference type="FunFam" id="1.20.140.10:FF:000003">
    <property type="entry name" value="isovaleryl-CoA dehydrogenase, mitochondrial"/>
    <property type="match status" value="1"/>
</dbReference>
<dbReference type="Gene3D" id="1.10.540.10">
    <property type="entry name" value="Acyl-CoA dehydrogenase/oxidase, N-terminal domain"/>
    <property type="match status" value="1"/>
</dbReference>
<dbReference type="Gene3D" id="2.40.110.10">
    <property type="entry name" value="Butyryl-CoA Dehydrogenase, subunit A, domain 2"/>
    <property type="match status" value="1"/>
</dbReference>
<dbReference type="Gene3D" id="1.20.140.10">
    <property type="entry name" value="Butyryl-CoA Dehydrogenase, subunit A, domain 3"/>
    <property type="match status" value="1"/>
</dbReference>
<dbReference type="InterPro" id="IPR006089">
    <property type="entry name" value="Acyl-CoA_DH_CS"/>
</dbReference>
<dbReference type="InterPro" id="IPR006091">
    <property type="entry name" value="Acyl-CoA_Oxase/DH_mid-dom"/>
</dbReference>
<dbReference type="InterPro" id="IPR046373">
    <property type="entry name" value="Acyl-CoA_Oxase/DH_mid-dom_sf"/>
</dbReference>
<dbReference type="InterPro" id="IPR036250">
    <property type="entry name" value="AcylCo_DH-like_C"/>
</dbReference>
<dbReference type="InterPro" id="IPR009075">
    <property type="entry name" value="AcylCo_DH/oxidase_C"/>
</dbReference>
<dbReference type="InterPro" id="IPR013786">
    <property type="entry name" value="AcylCoA_DH/ox_N"/>
</dbReference>
<dbReference type="InterPro" id="IPR037069">
    <property type="entry name" value="AcylCoA_DH/ox_N_sf"/>
</dbReference>
<dbReference type="InterPro" id="IPR009100">
    <property type="entry name" value="AcylCoA_DH/oxidase_NM_dom_sf"/>
</dbReference>
<dbReference type="InterPro" id="IPR034183">
    <property type="entry name" value="IVD"/>
</dbReference>
<dbReference type="PANTHER" id="PTHR43884">
    <property type="entry name" value="ACYL-COA DEHYDROGENASE"/>
    <property type="match status" value="1"/>
</dbReference>
<dbReference type="PANTHER" id="PTHR43884:SF12">
    <property type="entry name" value="ISOVALERYL-COA DEHYDROGENASE, MITOCHONDRIAL-RELATED"/>
    <property type="match status" value="1"/>
</dbReference>
<dbReference type="Pfam" id="PF00441">
    <property type="entry name" value="Acyl-CoA_dh_1"/>
    <property type="match status" value="1"/>
</dbReference>
<dbReference type="Pfam" id="PF02770">
    <property type="entry name" value="Acyl-CoA_dh_M"/>
    <property type="match status" value="1"/>
</dbReference>
<dbReference type="Pfam" id="PF02771">
    <property type="entry name" value="Acyl-CoA_dh_N"/>
    <property type="match status" value="1"/>
</dbReference>
<dbReference type="SUPFAM" id="SSF47203">
    <property type="entry name" value="Acyl-CoA dehydrogenase C-terminal domain-like"/>
    <property type="match status" value="1"/>
</dbReference>
<dbReference type="SUPFAM" id="SSF56645">
    <property type="entry name" value="Acyl-CoA dehydrogenase NM domain-like"/>
    <property type="match status" value="1"/>
</dbReference>
<dbReference type="PROSITE" id="PS00072">
    <property type="entry name" value="ACYL_COA_DH_1"/>
    <property type="match status" value="1"/>
</dbReference>
<dbReference type="PROSITE" id="PS00073">
    <property type="entry name" value="ACYL_COA_DH_2"/>
    <property type="match status" value="1"/>
</dbReference>
<reference key="1">
    <citation type="submission" date="2004-11" db="EMBL/GenBank/DDBJ databases">
        <authorList>
            <consortium name="The German cDNA consortium"/>
        </authorList>
    </citation>
    <scope>NUCLEOTIDE SEQUENCE [LARGE SCALE MRNA]</scope>
    <source>
        <tissue>Kidney</tissue>
    </source>
</reference>
<proteinExistence type="evidence at transcript level"/>
<feature type="transit peptide" description="Mitochondrion" evidence="2">
    <location>
        <begin position="1"/>
        <end position="29"/>
    </location>
</feature>
<feature type="chain" id="PRO_0000000533" description="Isovaleryl-CoA dehydrogenase, mitochondrial">
    <location>
        <begin position="30"/>
        <end position="423"/>
    </location>
</feature>
<feature type="active site" description="Proton acceptor" evidence="2">
    <location>
        <position position="283"/>
    </location>
</feature>
<feature type="binding site" evidence="2">
    <location>
        <begin position="162"/>
        <end position="171"/>
    </location>
    <ligand>
        <name>FAD</name>
        <dbReference type="ChEBI" id="CHEBI:57692"/>
    </ligand>
</feature>
<feature type="binding site" evidence="2">
    <location>
        <position position="171"/>
    </location>
    <ligand>
        <name>substrate</name>
    </ligand>
</feature>
<feature type="binding site" evidence="2">
    <location>
        <begin position="195"/>
        <end position="197"/>
    </location>
    <ligand>
        <name>FAD</name>
        <dbReference type="ChEBI" id="CHEBI:57692"/>
    </ligand>
</feature>
<feature type="binding site" evidence="2">
    <location>
        <begin position="219"/>
        <end position="220"/>
    </location>
    <ligand>
        <name>substrate</name>
    </ligand>
</feature>
<feature type="binding site" evidence="2">
    <location>
        <position position="274"/>
    </location>
    <ligand>
        <name>substrate</name>
    </ligand>
</feature>
<feature type="binding site" evidence="2">
    <location>
        <begin position="281"/>
        <end position="284"/>
    </location>
    <ligand>
        <name>substrate</name>
    </ligand>
</feature>
<feature type="binding site" evidence="2">
    <location>
        <position position="309"/>
    </location>
    <ligand>
        <name>FAD</name>
        <dbReference type="ChEBI" id="CHEBI:57692"/>
    </ligand>
</feature>
<feature type="binding site" evidence="2">
    <location>
        <position position="320"/>
    </location>
    <ligand>
        <name>FAD</name>
        <dbReference type="ChEBI" id="CHEBI:57692"/>
    </ligand>
</feature>
<feature type="binding site" evidence="2">
    <location>
        <begin position="377"/>
        <end position="381"/>
    </location>
    <ligand>
        <name>FAD</name>
        <dbReference type="ChEBI" id="CHEBI:57692"/>
    </ligand>
</feature>
<feature type="binding site" evidence="2">
    <location>
        <begin position="404"/>
        <end position="405"/>
    </location>
    <ligand>
        <name>substrate</name>
    </ligand>
</feature>
<feature type="binding site" evidence="2">
    <location>
        <begin position="406"/>
        <end position="408"/>
    </location>
    <ligand>
        <name>FAD</name>
        <dbReference type="ChEBI" id="CHEBI:57692"/>
    </ligand>
</feature>
<feature type="modified residue" description="N6-acetyllysine; alternate" evidence="3">
    <location>
        <position position="55"/>
    </location>
</feature>
<feature type="modified residue" description="N6-succinyllysine; alternate" evidence="3">
    <location>
        <position position="55"/>
    </location>
</feature>
<feature type="modified residue" description="N6-acetyllysine; alternate" evidence="3">
    <location>
        <position position="64"/>
    </location>
</feature>
<feature type="modified residue" description="N6-succinyllysine; alternate" evidence="3">
    <location>
        <position position="64"/>
    </location>
</feature>
<feature type="modified residue" description="N6-acetyllysine; alternate" evidence="2">
    <location>
        <position position="75"/>
    </location>
</feature>
<feature type="modified residue" description="N6-succinyllysine; alternate" evidence="3">
    <location>
        <position position="75"/>
    </location>
</feature>
<feature type="modified residue" description="N6-acetyllysine" evidence="3">
    <location>
        <position position="238"/>
    </location>
</feature>
<feature type="modified residue" description="N6-acetyllysine; alternate" evidence="3">
    <location>
        <position position="259"/>
    </location>
</feature>
<feature type="modified residue" description="N6-succinyllysine; alternate" evidence="3">
    <location>
        <position position="259"/>
    </location>
</feature>
<feature type="modified residue" description="N6-succinyllysine" evidence="3">
    <location>
        <position position="315"/>
    </location>
</feature>
<name>IVD_PONAB</name>